<organism>
    <name type="scientific">Streptococcus agalactiae serotype V (strain ATCC BAA-611 / 2603 V/R)</name>
    <dbReference type="NCBI Taxonomy" id="208435"/>
    <lineage>
        <taxon>Bacteria</taxon>
        <taxon>Bacillati</taxon>
        <taxon>Bacillota</taxon>
        <taxon>Bacilli</taxon>
        <taxon>Lactobacillales</taxon>
        <taxon>Streptococcaceae</taxon>
        <taxon>Streptococcus</taxon>
    </lineage>
</organism>
<comment type="function">
    <text evidence="1">Involved in the biosynthesis of ADP-glucose, a building block required for the elongation reactions to produce glycogen. Catalyzes the reaction between ATP and alpha-D-glucose 1-phosphate (G1P) to produce pyrophosphate and ADP-Glc.</text>
</comment>
<comment type="catalytic activity">
    <reaction evidence="1">
        <text>alpha-D-glucose 1-phosphate + ATP + H(+) = ADP-alpha-D-glucose + diphosphate</text>
        <dbReference type="Rhea" id="RHEA:12120"/>
        <dbReference type="ChEBI" id="CHEBI:15378"/>
        <dbReference type="ChEBI" id="CHEBI:30616"/>
        <dbReference type="ChEBI" id="CHEBI:33019"/>
        <dbReference type="ChEBI" id="CHEBI:57498"/>
        <dbReference type="ChEBI" id="CHEBI:58601"/>
        <dbReference type="EC" id="2.7.7.27"/>
    </reaction>
</comment>
<comment type="pathway">
    <text evidence="1">Glycan biosynthesis; glycogen biosynthesis.</text>
</comment>
<comment type="subunit">
    <text evidence="1">Homotetramer.</text>
</comment>
<comment type="similarity">
    <text evidence="1">Belongs to the bacterial/plant glucose-1-phosphate adenylyltransferase family.</text>
</comment>
<dbReference type="EC" id="2.7.7.27" evidence="1"/>
<dbReference type="EMBL" id="AE009948">
    <property type="protein sequence ID" value="AAM99741.1"/>
    <property type="molecule type" value="Genomic_DNA"/>
</dbReference>
<dbReference type="RefSeq" id="NP_687869.1">
    <property type="nucleotide sequence ID" value="NC_004116.1"/>
</dbReference>
<dbReference type="RefSeq" id="WP_000787290.1">
    <property type="nucleotide sequence ID" value="NC_004116.1"/>
</dbReference>
<dbReference type="SMR" id="Q8E080"/>
<dbReference type="STRING" id="208435.SAG0854"/>
<dbReference type="KEGG" id="sag:SAG0854"/>
<dbReference type="PATRIC" id="fig|208435.3.peg.860"/>
<dbReference type="HOGENOM" id="CLU_029499_14_0_9"/>
<dbReference type="OrthoDB" id="9801810at2"/>
<dbReference type="UniPathway" id="UPA00164"/>
<dbReference type="Proteomes" id="UP000000821">
    <property type="component" value="Chromosome"/>
</dbReference>
<dbReference type="GO" id="GO:0005524">
    <property type="term" value="F:ATP binding"/>
    <property type="evidence" value="ECO:0007669"/>
    <property type="project" value="UniProtKB-KW"/>
</dbReference>
<dbReference type="GO" id="GO:0008878">
    <property type="term" value="F:glucose-1-phosphate adenylyltransferase activity"/>
    <property type="evidence" value="ECO:0007669"/>
    <property type="project" value="UniProtKB-UniRule"/>
</dbReference>
<dbReference type="GO" id="GO:0005978">
    <property type="term" value="P:glycogen biosynthetic process"/>
    <property type="evidence" value="ECO:0007669"/>
    <property type="project" value="UniProtKB-UniRule"/>
</dbReference>
<dbReference type="CDD" id="cd02508">
    <property type="entry name" value="ADP_Glucose_PP"/>
    <property type="match status" value="1"/>
</dbReference>
<dbReference type="CDD" id="cd04651">
    <property type="entry name" value="LbH_G1P_AT_C"/>
    <property type="match status" value="1"/>
</dbReference>
<dbReference type="Gene3D" id="2.160.10.10">
    <property type="entry name" value="Hexapeptide repeat proteins"/>
    <property type="match status" value="1"/>
</dbReference>
<dbReference type="Gene3D" id="3.90.550.10">
    <property type="entry name" value="Spore Coat Polysaccharide Biosynthesis Protein SpsA, Chain A"/>
    <property type="match status" value="1"/>
</dbReference>
<dbReference type="HAMAP" id="MF_00624">
    <property type="entry name" value="GlgC"/>
    <property type="match status" value="1"/>
</dbReference>
<dbReference type="InterPro" id="IPR011831">
    <property type="entry name" value="ADP-Glc_PPase"/>
</dbReference>
<dbReference type="InterPro" id="IPR005836">
    <property type="entry name" value="ADP_Glu_pyroP_CS"/>
</dbReference>
<dbReference type="InterPro" id="IPR023049">
    <property type="entry name" value="GlgC_bac"/>
</dbReference>
<dbReference type="InterPro" id="IPR056818">
    <property type="entry name" value="GlmU/GlgC-like_hexapep"/>
</dbReference>
<dbReference type="InterPro" id="IPR005835">
    <property type="entry name" value="NTP_transferase_dom"/>
</dbReference>
<dbReference type="InterPro" id="IPR029044">
    <property type="entry name" value="Nucleotide-diphossugar_trans"/>
</dbReference>
<dbReference type="InterPro" id="IPR011004">
    <property type="entry name" value="Trimer_LpxA-like_sf"/>
</dbReference>
<dbReference type="NCBIfam" id="TIGR02091">
    <property type="entry name" value="glgC"/>
    <property type="match status" value="1"/>
</dbReference>
<dbReference type="NCBIfam" id="NF003670">
    <property type="entry name" value="PRK05293.1"/>
    <property type="match status" value="1"/>
</dbReference>
<dbReference type="PANTHER" id="PTHR43523:SF2">
    <property type="entry name" value="GLUCOSE-1-PHOSPHATE ADENYLYLTRANSFERASE"/>
    <property type="match status" value="1"/>
</dbReference>
<dbReference type="PANTHER" id="PTHR43523">
    <property type="entry name" value="GLUCOSE-1-PHOSPHATE ADENYLYLTRANSFERASE-RELATED"/>
    <property type="match status" value="1"/>
</dbReference>
<dbReference type="Pfam" id="PF24894">
    <property type="entry name" value="Hexapep_GlmU"/>
    <property type="match status" value="1"/>
</dbReference>
<dbReference type="Pfam" id="PF00483">
    <property type="entry name" value="NTP_transferase"/>
    <property type="match status" value="1"/>
</dbReference>
<dbReference type="SUPFAM" id="SSF53448">
    <property type="entry name" value="Nucleotide-diphospho-sugar transferases"/>
    <property type="match status" value="1"/>
</dbReference>
<dbReference type="SUPFAM" id="SSF51161">
    <property type="entry name" value="Trimeric LpxA-like enzymes"/>
    <property type="match status" value="1"/>
</dbReference>
<dbReference type="PROSITE" id="PS00808">
    <property type="entry name" value="ADP_GLC_PYROPHOSPH_1"/>
    <property type="match status" value="1"/>
</dbReference>
<dbReference type="PROSITE" id="PS00809">
    <property type="entry name" value="ADP_GLC_PYROPHOSPH_2"/>
    <property type="match status" value="1"/>
</dbReference>
<dbReference type="PROSITE" id="PS00810">
    <property type="entry name" value="ADP_GLC_PYROPHOSPH_3"/>
    <property type="match status" value="1"/>
</dbReference>
<name>GLGC_STRA5</name>
<proteinExistence type="inferred from homology"/>
<feature type="chain" id="PRO_0000195331" description="Glucose-1-phosphate adenylyltransferase">
    <location>
        <begin position="1"/>
        <end position="379"/>
    </location>
</feature>
<feature type="binding site" evidence="1">
    <location>
        <position position="164"/>
    </location>
    <ligand>
        <name>alpha-D-glucose 1-phosphate</name>
        <dbReference type="ChEBI" id="CHEBI:58601"/>
    </ligand>
</feature>
<feature type="binding site" evidence="1">
    <location>
        <begin position="179"/>
        <end position="180"/>
    </location>
    <ligand>
        <name>alpha-D-glucose 1-phosphate</name>
        <dbReference type="ChEBI" id="CHEBI:58601"/>
    </ligand>
</feature>
<feature type="binding site" evidence="1">
    <location>
        <position position="190"/>
    </location>
    <ligand>
        <name>alpha-D-glucose 1-phosphate</name>
        <dbReference type="ChEBI" id="CHEBI:58601"/>
    </ligand>
</feature>
<protein>
    <recommendedName>
        <fullName evidence="1">Glucose-1-phosphate adenylyltransferase</fullName>
        <ecNumber evidence="1">2.7.7.27</ecNumber>
    </recommendedName>
    <alternativeName>
        <fullName evidence="1">ADP-glucose pyrophosphorylase</fullName>
        <shortName evidence="1">ADPGlc PPase</shortName>
    </alternativeName>
    <alternativeName>
        <fullName evidence="1">ADP-glucose synthase</fullName>
    </alternativeName>
</protein>
<evidence type="ECO:0000255" key="1">
    <source>
        <dbReference type="HAMAP-Rule" id="MF_00624"/>
    </source>
</evidence>
<reference key="1">
    <citation type="journal article" date="2002" name="Proc. Natl. Acad. Sci. U.S.A.">
        <title>Complete genome sequence and comparative genomic analysis of an emerging human pathogen, serotype V Streptococcus agalactiae.</title>
        <authorList>
            <person name="Tettelin H."/>
            <person name="Masignani V."/>
            <person name="Cieslewicz M.J."/>
            <person name="Eisen J.A."/>
            <person name="Peterson S.N."/>
            <person name="Wessels M.R."/>
            <person name="Paulsen I.T."/>
            <person name="Nelson K.E."/>
            <person name="Margarit I."/>
            <person name="Read T.D."/>
            <person name="Madoff L.C."/>
            <person name="Wolf A.M."/>
            <person name="Beanan M.J."/>
            <person name="Brinkac L.M."/>
            <person name="Daugherty S.C."/>
            <person name="DeBoy R.T."/>
            <person name="Durkin A.S."/>
            <person name="Kolonay J.F."/>
            <person name="Madupu R."/>
            <person name="Lewis M.R."/>
            <person name="Radune D."/>
            <person name="Fedorova N.B."/>
            <person name="Scanlan D."/>
            <person name="Khouri H.M."/>
            <person name="Mulligan S."/>
            <person name="Carty H.A."/>
            <person name="Cline R.T."/>
            <person name="Van Aken S.E."/>
            <person name="Gill J."/>
            <person name="Scarselli M."/>
            <person name="Mora M."/>
            <person name="Iacobini E.T."/>
            <person name="Brettoni C."/>
            <person name="Galli G."/>
            <person name="Mariani M."/>
            <person name="Vegni F."/>
            <person name="Maione D."/>
            <person name="Rinaudo D."/>
            <person name="Rappuoli R."/>
            <person name="Telford J.L."/>
            <person name="Kasper D.L."/>
            <person name="Grandi G."/>
            <person name="Fraser C.M."/>
        </authorList>
    </citation>
    <scope>NUCLEOTIDE SEQUENCE [LARGE SCALE GENOMIC DNA]</scope>
    <source>
        <strain>ATCC BAA-611 / 2603 V/R</strain>
    </source>
</reference>
<sequence>MKNEMLALILAGGQGTRLGKLTQSIAKPAVQFGGRYRIIDFALSNCANSGINNVGVITQYQPLELNTHIGNGSSWGLDGIDSGVTVLQPYSATEGNRWFQGTSHAIYQNIDYIDRINPEYVLILSGDHIYKMNYDDMLQTHKDNLASLTVAVLDVPLKEASRFGIMNTDSNDRIVEFEEKPEHPKSTKASMGIYIFDWKRLRTVLIDGEKNGIDMSDFGKNVIPAYLESGERVYTYNFDGYWKDVGTIESLWEANMEYIGEDNKLHSRDRSWKIYSKNLIAPPNFMTEDANVKDSLVVDGCFVAGNVEHSILSTNVQVKPNAIIKDSFVMSGATIGEGAKINRAIIGEDAVIGDGVVIDGSKEVEVIGYKEVAGVPNED</sequence>
<keyword id="KW-0067">ATP-binding</keyword>
<keyword id="KW-0119">Carbohydrate metabolism</keyword>
<keyword id="KW-0320">Glycogen biosynthesis</keyword>
<keyword id="KW-0321">Glycogen metabolism</keyword>
<keyword id="KW-0547">Nucleotide-binding</keyword>
<keyword id="KW-0548">Nucleotidyltransferase</keyword>
<keyword id="KW-1185">Reference proteome</keyword>
<keyword id="KW-0808">Transferase</keyword>
<accession>Q8E080</accession>
<gene>
    <name evidence="1" type="primary">glgC</name>
    <name type="ordered locus">SAG0854</name>
</gene>